<dbReference type="EC" id="5.2.1.8"/>
<dbReference type="EMBL" id="CH476735">
    <property type="protein sequence ID" value="EIE81990.1"/>
    <property type="molecule type" value="Genomic_DNA"/>
</dbReference>
<dbReference type="SMR" id="P0C1I5"/>
<dbReference type="STRING" id="246409.P0C1I5"/>
<dbReference type="VEuPathDB" id="FungiDB:RO3G_06695"/>
<dbReference type="eggNOG" id="KOG0884">
    <property type="taxonomic scope" value="Eukaryota"/>
</dbReference>
<dbReference type="InParanoid" id="P0C1I5"/>
<dbReference type="OMA" id="FHEATPK"/>
<dbReference type="OrthoDB" id="1329at4827"/>
<dbReference type="Proteomes" id="UP000009138">
    <property type="component" value="Unassembled WGS sequence"/>
</dbReference>
<dbReference type="GO" id="GO:0071013">
    <property type="term" value="C:catalytic step 2 spliceosome"/>
    <property type="evidence" value="ECO:0007669"/>
    <property type="project" value="TreeGrafter"/>
</dbReference>
<dbReference type="GO" id="GO:0003755">
    <property type="term" value="F:peptidyl-prolyl cis-trans isomerase activity"/>
    <property type="evidence" value="ECO:0007669"/>
    <property type="project" value="UniProtKB-KW"/>
</dbReference>
<dbReference type="CDD" id="cd01928">
    <property type="entry name" value="Cyclophilin_PPIL3_like"/>
    <property type="match status" value="1"/>
</dbReference>
<dbReference type="FunFam" id="2.40.100.10:FF:000012">
    <property type="entry name" value="Peptidyl-prolyl cis-trans isomerase"/>
    <property type="match status" value="1"/>
</dbReference>
<dbReference type="Gene3D" id="2.40.100.10">
    <property type="entry name" value="Cyclophilin-like"/>
    <property type="match status" value="1"/>
</dbReference>
<dbReference type="InterPro" id="IPR029000">
    <property type="entry name" value="Cyclophilin-like_dom_sf"/>
</dbReference>
<dbReference type="InterPro" id="IPR024936">
    <property type="entry name" value="Cyclophilin-type_PPIase"/>
</dbReference>
<dbReference type="InterPro" id="IPR002130">
    <property type="entry name" value="Cyclophilin-type_PPIase_dom"/>
</dbReference>
<dbReference type="InterPro" id="IPR044666">
    <property type="entry name" value="Cyclophilin_A-like"/>
</dbReference>
<dbReference type="PANTHER" id="PTHR45625:SF2">
    <property type="entry name" value="PEPTIDYL-PROLYL CIS-TRANS ISOMERASE-LIKE 3"/>
    <property type="match status" value="1"/>
</dbReference>
<dbReference type="PANTHER" id="PTHR45625">
    <property type="entry name" value="PEPTIDYL-PROLYL CIS-TRANS ISOMERASE-RELATED"/>
    <property type="match status" value="1"/>
</dbReference>
<dbReference type="Pfam" id="PF00160">
    <property type="entry name" value="Pro_isomerase"/>
    <property type="match status" value="1"/>
</dbReference>
<dbReference type="PIRSF" id="PIRSF001467">
    <property type="entry name" value="Peptidylpro_ismrse"/>
    <property type="match status" value="1"/>
</dbReference>
<dbReference type="PRINTS" id="PR00153">
    <property type="entry name" value="CSAPPISMRASE"/>
</dbReference>
<dbReference type="SUPFAM" id="SSF50891">
    <property type="entry name" value="Cyclophilin-like"/>
    <property type="match status" value="1"/>
</dbReference>
<dbReference type="PROSITE" id="PS50072">
    <property type="entry name" value="CSA_PPIASE_2"/>
    <property type="match status" value="1"/>
</dbReference>
<keyword id="KW-0413">Isomerase</keyword>
<keyword id="KW-1185">Reference proteome</keyword>
<keyword id="KW-0697">Rotamase</keyword>
<feature type="chain" id="PRO_0000244718" description="Peptidyl-prolyl cis-trans isomerase-like 3">
    <location>
        <begin position="1"/>
        <end position="170"/>
    </location>
</feature>
<feature type="domain" description="PPIase cyclophilin-type" evidence="2">
    <location>
        <begin position="1"/>
        <end position="160"/>
    </location>
</feature>
<gene>
    <name type="primary">cyp4</name>
    <name type="ORF">RO3G_06695</name>
</gene>
<accession>P0C1I5</accession>
<accession>I1C0L0</accession>
<sequence length="170" mass="18911">MSVTLHTDLGDIKIEVFCEAVPKTAENFLALCASGYYDNNTFHRNIPGFMIQVHEHLHTGDPTGTGKGGNSIWGKKFNDEIRSTLKHNSRGIVSMANSGPNTNGSQFFITYAKHPHLDTKYTVFGKVIDGADSTLDMMEKVPVDEKHRPLQEFRIKSVTIHANPIADKQL</sequence>
<proteinExistence type="inferred from homology"/>
<organism>
    <name type="scientific">Rhizopus delemar (strain RA 99-880 / ATCC MYA-4621 / FGSC 9543 / NRRL 43880)</name>
    <name type="common">Mucormycosis agent</name>
    <name type="synonym">Rhizopus arrhizus var. delemar</name>
    <dbReference type="NCBI Taxonomy" id="246409"/>
    <lineage>
        <taxon>Eukaryota</taxon>
        <taxon>Fungi</taxon>
        <taxon>Fungi incertae sedis</taxon>
        <taxon>Mucoromycota</taxon>
        <taxon>Mucoromycotina</taxon>
        <taxon>Mucoromycetes</taxon>
        <taxon>Mucorales</taxon>
        <taxon>Mucorineae</taxon>
        <taxon>Rhizopodaceae</taxon>
        <taxon>Rhizopus</taxon>
    </lineage>
</organism>
<protein>
    <recommendedName>
        <fullName>Peptidyl-prolyl cis-trans isomerase-like 3</fullName>
        <shortName>PPIase</shortName>
        <ecNumber>5.2.1.8</ecNumber>
    </recommendedName>
    <alternativeName>
        <fullName>Rotamase</fullName>
    </alternativeName>
</protein>
<name>PPIL3_RHIO9</name>
<evidence type="ECO:0000250" key="1"/>
<evidence type="ECO:0000255" key="2">
    <source>
        <dbReference type="PROSITE-ProRule" id="PRU00156"/>
    </source>
</evidence>
<evidence type="ECO:0000305" key="3"/>
<reference key="1">
    <citation type="journal article" date="2009" name="PLoS Genet.">
        <title>Genomic analysis of the basal lineage fungus Rhizopus oryzae reveals a whole-genome duplication.</title>
        <authorList>
            <person name="Ma L.-J."/>
            <person name="Ibrahim A.S."/>
            <person name="Skory C."/>
            <person name="Grabherr M.G."/>
            <person name="Burger G."/>
            <person name="Butler M."/>
            <person name="Elias M."/>
            <person name="Idnurm A."/>
            <person name="Lang B.F."/>
            <person name="Sone T."/>
            <person name="Abe A."/>
            <person name="Calvo S.E."/>
            <person name="Corrochano L.M."/>
            <person name="Engels R."/>
            <person name="Fu J."/>
            <person name="Hansberg W."/>
            <person name="Kim J.-M."/>
            <person name="Kodira C.D."/>
            <person name="Koehrsen M.J."/>
            <person name="Liu B."/>
            <person name="Miranda-Saavedra D."/>
            <person name="O'Leary S."/>
            <person name="Ortiz-Castellanos L."/>
            <person name="Poulter R."/>
            <person name="Rodriguez-Romero J."/>
            <person name="Ruiz-Herrera J."/>
            <person name="Shen Y.-Q."/>
            <person name="Zeng Q."/>
            <person name="Galagan J."/>
            <person name="Birren B.W."/>
            <person name="Cuomo C.A."/>
            <person name="Wickes B.L."/>
        </authorList>
    </citation>
    <scope>NUCLEOTIDE SEQUENCE [LARGE SCALE GENOMIC DNA]</scope>
    <source>
        <strain>RA 99-880 / ATCC MYA-4621 / FGSC 9543 / NRRL 43880</strain>
    </source>
</reference>
<comment type="function">
    <text evidence="1">PPIases accelerate the folding of proteins. It catalyzes the cis-trans isomerization of proline imidic peptide bonds in oligopeptides (By similarity).</text>
</comment>
<comment type="catalytic activity">
    <reaction>
        <text>[protein]-peptidylproline (omega=180) = [protein]-peptidylproline (omega=0)</text>
        <dbReference type="Rhea" id="RHEA:16237"/>
        <dbReference type="Rhea" id="RHEA-COMP:10747"/>
        <dbReference type="Rhea" id="RHEA-COMP:10748"/>
        <dbReference type="ChEBI" id="CHEBI:83833"/>
        <dbReference type="ChEBI" id="CHEBI:83834"/>
        <dbReference type="EC" id="5.2.1.8"/>
    </reaction>
</comment>
<comment type="similarity">
    <text evidence="3">Belongs to the cyclophilin-type PPIase family. PPIL3 subfamily.</text>
</comment>